<proteinExistence type="inferred from homology"/>
<dbReference type="EC" id="6.1.1.5" evidence="1"/>
<dbReference type="EMBL" id="AE017332">
    <property type="protein sequence ID" value="AAV27692.1"/>
    <property type="molecule type" value="Genomic_DNA"/>
</dbReference>
<dbReference type="RefSeq" id="WP_011205872.1">
    <property type="nucleotide sequence ID" value="NC_006360.1"/>
</dbReference>
<dbReference type="SMR" id="Q602B7"/>
<dbReference type="KEGG" id="mhy:mhp033"/>
<dbReference type="eggNOG" id="COG0060">
    <property type="taxonomic scope" value="Bacteria"/>
</dbReference>
<dbReference type="HOGENOM" id="CLU_001493_7_1_14"/>
<dbReference type="Proteomes" id="UP000006822">
    <property type="component" value="Chromosome"/>
</dbReference>
<dbReference type="GO" id="GO:0005829">
    <property type="term" value="C:cytosol"/>
    <property type="evidence" value="ECO:0007669"/>
    <property type="project" value="TreeGrafter"/>
</dbReference>
<dbReference type="GO" id="GO:0002161">
    <property type="term" value="F:aminoacyl-tRNA deacylase activity"/>
    <property type="evidence" value="ECO:0007669"/>
    <property type="project" value="InterPro"/>
</dbReference>
<dbReference type="GO" id="GO:0005524">
    <property type="term" value="F:ATP binding"/>
    <property type="evidence" value="ECO:0007669"/>
    <property type="project" value="UniProtKB-UniRule"/>
</dbReference>
<dbReference type="GO" id="GO:0004822">
    <property type="term" value="F:isoleucine-tRNA ligase activity"/>
    <property type="evidence" value="ECO:0007669"/>
    <property type="project" value="UniProtKB-UniRule"/>
</dbReference>
<dbReference type="GO" id="GO:0000049">
    <property type="term" value="F:tRNA binding"/>
    <property type="evidence" value="ECO:0007669"/>
    <property type="project" value="InterPro"/>
</dbReference>
<dbReference type="GO" id="GO:0008270">
    <property type="term" value="F:zinc ion binding"/>
    <property type="evidence" value="ECO:0007669"/>
    <property type="project" value="UniProtKB-UniRule"/>
</dbReference>
<dbReference type="GO" id="GO:0006428">
    <property type="term" value="P:isoleucyl-tRNA aminoacylation"/>
    <property type="evidence" value="ECO:0007669"/>
    <property type="project" value="UniProtKB-UniRule"/>
</dbReference>
<dbReference type="CDD" id="cd07960">
    <property type="entry name" value="Anticodon_Ia_Ile_BEm"/>
    <property type="match status" value="1"/>
</dbReference>
<dbReference type="CDD" id="cd00818">
    <property type="entry name" value="IleRS_core"/>
    <property type="match status" value="1"/>
</dbReference>
<dbReference type="FunFam" id="3.40.50.620:FF:000152">
    <property type="entry name" value="Isoleucine--tRNA ligase"/>
    <property type="match status" value="1"/>
</dbReference>
<dbReference type="Gene3D" id="1.10.730.20">
    <property type="match status" value="1"/>
</dbReference>
<dbReference type="Gene3D" id="3.40.50.620">
    <property type="entry name" value="HUPs"/>
    <property type="match status" value="2"/>
</dbReference>
<dbReference type="Gene3D" id="1.10.10.830">
    <property type="entry name" value="Ile-tRNA synthetase CP2 domain-like"/>
    <property type="match status" value="1"/>
</dbReference>
<dbReference type="HAMAP" id="MF_02002">
    <property type="entry name" value="Ile_tRNA_synth_type1"/>
    <property type="match status" value="1"/>
</dbReference>
<dbReference type="InterPro" id="IPR001412">
    <property type="entry name" value="aa-tRNA-synth_I_CS"/>
</dbReference>
<dbReference type="InterPro" id="IPR002300">
    <property type="entry name" value="aa-tRNA-synth_Ia"/>
</dbReference>
<dbReference type="InterPro" id="IPR033708">
    <property type="entry name" value="Anticodon_Ile_BEm"/>
</dbReference>
<dbReference type="InterPro" id="IPR002301">
    <property type="entry name" value="Ile-tRNA-ligase"/>
</dbReference>
<dbReference type="InterPro" id="IPR023585">
    <property type="entry name" value="Ile-tRNA-ligase_type1"/>
</dbReference>
<dbReference type="InterPro" id="IPR050081">
    <property type="entry name" value="Ile-tRNA_ligase"/>
</dbReference>
<dbReference type="InterPro" id="IPR013155">
    <property type="entry name" value="M/V/L/I-tRNA-synth_anticd-bd"/>
</dbReference>
<dbReference type="InterPro" id="IPR014729">
    <property type="entry name" value="Rossmann-like_a/b/a_fold"/>
</dbReference>
<dbReference type="InterPro" id="IPR009080">
    <property type="entry name" value="tRNAsynth_Ia_anticodon-bd"/>
</dbReference>
<dbReference type="InterPro" id="IPR009008">
    <property type="entry name" value="Val/Leu/Ile-tRNA-synth_edit"/>
</dbReference>
<dbReference type="NCBIfam" id="TIGR00392">
    <property type="entry name" value="ileS"/>
    <property type="match status" value="1"/>
</dbReference>
<dbReference type="PANTHER" id="PTHR42765:SF1">
    <property type="entry name" value="ISOLEUCINE--TRNA LIGASE, MITOCHONDRIAL"/>
    <property type="match status" value="1"/>
</dbReference>
<dbReference type="PANTHER" id="PTHR42765">
    <property type="entry name" value="SOLEUCYL-TRNA SYNTHETASE"/>
    <property type="match status" value="1"/>
</dbReference>
<dbReference type="Pfam" id="PF08264">
    <property type="entry name" value="Anticodon_1"/>
    <property type="match status" value="1"/>
</dbReference>
<dbReference type="Pfam" id="PF00133">
    <property type="entry name" value="tRNA-synt_1"/>
    <property type="match status" value="1"/>
</dbReference>
<dbReference type="PRINTS" id="PR00984">
    <property type="entry name" value="TRNASYNTHILE"/>
</dbReference>
<dbReference type="SUPFAM" id="SSF47323">
    <property type="entry name" value="Anticodon-binding domain of a subclass of class I aminoacyl-tRNA synthetases"/>
    <property type="match status" value="1"/>
</dbReference>
<dbReference type="SUPFAM" id="SSF52374">
    <property type="entry name" value="Nucleotidylyl transferase"/>
    <property type="match status" value="1"/>
</dbReference>
<dbReference type="SUPFAM" id="SSF50677">
    <property type="entry name" value="ValRS/IleRS/LeuRS editing domain"/>
    <property type="match status" value="1"/>
</dbReference>
<dbReference type="PROSITE" id="PS00178">
    <property type="entry name" value="AA_TRNA_LIGASE_I"/>
    <property type="match status" value="1"/>
</dbReference>
<organism>
    <name type="scientific">Mesomycoplasma hyopneumoniae (strain 232)</name>
    <name type="common">Mycoplasma hyopneumoniae</name>
    <dbReference type="NCBI Taxonomy" id="295358"/>
    <lineage>
        <taxon>Bacteria</taxon>
        <taxon>Bacillati</taxon>
        <taxon>Mycoplasmatota</taxon>
        <taxon>Mycoplasmoidales</taxon>
        <taxon>Metamycoplasmataceae</taxon>
        <taxon>Mesomycoplasma</taxon>
    </lineage>
</organism>
<name>SYI_MESH2</name>
<evidence type="ECO:0000255" key="1">
    <source>
        <dbReference type="HAMAP-Rule" id="MF_02002"/>
    </source>
</evidence>
<sequence length="886" mass="104166">MDKNFYKNSLNIFNSNFSMKANLSEKDKFYADFWEKNQIYQQILRKRRGNPRFILHDGPPYANGDIHIGHALNKILKDIIVRYKTMAGFYSPFVPGWDTHGLPIENKIINQIGSKSTLEIRRKSNDFANSQILAQMKQFKKLNLLTDFKQIYQTNTPNYEAKQLKLFKKMVSRGLVYRALKPVYWSPSSQSALAEAEIEYLEYRSPSLFTSFDIKKGNNFVAENDKLIIWTTTPWTLIANSGVAVGENFDYVRIKNGENFYVLAANLLEKLAVIFDWKHYEIIDNFPGKSILGIKYLHPIFEKICPIVSGNHVSLDVGSGLVHLAPLFGEDDYWIGRENNLEMVMHVNDDGKFNENAGQFSGQFYADSNKLITEFLEKKSKILHLSFIDHSFPHDWRTLKPVIYRGTPQWFVSIEKIKKDLEKAIEEIEFPENWLKKRLTKMVVERKDWLISRQRSWGIPLIIFYDQNKEPVLDKPEIFDYIISLVEKFGSRIWYEKTTDELLPEKYQNLGWTKENDILDVWFDSGVSFFAANISDEKPPFDIYFEGSDQYRGWFNSSLINSVIYFGFSPYKKLLSHGFVVDAKGNKMSKSRGNGVDPLVILSKYGCDIFRLWVANSEYYNDIVYSEAIFEQNVEIYRKIRNTVRFLITNLADFKPKKYELTEVDLYIFNKIQKLKNEIIQNYDQNRFVRVVKIINNFIIEFSNFYLSIVKDILYADKEESLKRRQVQYNLYELLQVLNIAIAPIMPTTAEEIYSFIQKNNKQISVHMEEFFKKSHFDEELDAKWDEFFQIKDSVYQLIEQKIKSKEIKRPNEVGVLLKTDSDFIKSIDLEKLLMVAKVEFSNEKTEILQLNWEKCPRCWNHFEKINKVCARCFEVLNEIVPEKNS</sequence>
<reference key="1">
    <citation type="journal article" date="2004" name="J. Bacteriol.">
        <title>The genome sequence of Mycoplasma hyopneumoniae strain 232, the agent of swine mycoplasmosis.</title>
        <authorList>
            <person name="Minion F.C."/>
            <person name="Lefkowitz E.J."/>
            <person name="Madsen M.L."/>
            <person name="Cleary B.J."/>
            <person name="Swartzell S.M."/>
            <person name="Mahairas G.G."/>
        </authorList>
    </citation>
    <scope>NUCLEOTIDE SEQUENCE [LARGE SCALE GENOMIC DNA]</scope>
    <source>
        <strain>232</strain>
    </source>
</reference>
<gene>
    <name evidence="1" type="primary">ileS</name>
    <name type="ordered locus">mhp033</name>
</gene>
<feature type="chain" id="PRO_0000098418" description="Isoleucine--tRNA ligase">
    <location>
        <begin position="1"/>
        <end position="886"/>
    </location>
</feature>
<feature type="short sequence motif" description="'HIGH' region">
    <location>
        <begin position="60"/>
        <end position="70"/>
    </location>
</feature>
<feature type="short sequence motif" description="'KMSKS' region">
    <location>
        <begin position="587"/>
        <end position="591"/>
    </location>
</feature>
<feature type="binding site" evidence="1">
    <location>
        <position position="546"/>
    </location>
    <ligand>
        <name>L-isoleucyl-5'-AMP</name>
        <dbReference type="ChEBI" id="CHEBI:178002"/>
    </ligand>
</feature>
<feature type="binding site" evidence="1">
    <location>
        <position position="590"/>
    </location>
    <ligand>
        <name>ATP</name>
        <dbReference type="ChEBI" id="CHEBI:30616"/>
    </ligand>
</feature>
<feature type="binding site" evidence="1">
    <location>
        <position position="856"/>
    </location>
    <ligand>
        <name>Zn(2+)</name>
        <dbReference type="ChEBI" id="CHEBI:29105"/>
    </ligand>
</feature>
<feature type="binding site" evidence="1">
    <location>
        <position position="859"/>
    </location>
    <ligand>
        <name>Zn(2+)</name>
        <dbReference type="ChEBI" id="CHEBI:29105"/>
    </ligand>
</feature>
<feature type="binding site" evidence="1">
    <location>
        <position position="870"/>
    </location>
    <ligand>
        <name>Zn(2+)</name>
        <dbReference type="ChEBI" id="CHEBI:29105"/>
    </ligand>
</feature>
<feature type="binding site" evidence="1">
    <location>
        <position position="873"/>
    </location>
    <ligand>
        <name>Zn(2+)</name>
        <dbReference type="ChEBI" id="CHEBI:29105"/>
    </ligand>
</feature>
<comment type="function">
    <text evidence="1">Catalyzes the attachment of isoleucine to tRNA(Ile). As IleRS can inadvertently accommodate and process structurally similar amino acids such as valine, to avoid such errors it has two additional distinct tRNA(Ile)-dependent editing activities. One activity is designated as 'pretransfer' editing and involves the hydrolysis of activated Val-AMP. The other activity is designated 'posttransfer' editing and involves deacylation of mischarged Val-tRNA(Ile).</text>
</comment>
<comment type="catalytic activity">
    <reaction evidence="1">
        <text>tRNA(Ile) + L-isoleucine + ATP = L-isoleucyl-tRNA(Ile) + AMP + diphosphate</text>
        <dbReference type="Rhea" id="RHEA:11060"/>
        <dbReference type="Rhea" id="RHEA-COMP:9666"/>
        <dbReference type="Rhea" id="RHEA-COMP:9695"/>
        <dbReference type="ChEBI" id="CHEBI:30616"/>
        <dbReference type="ChEBI" id="CHEBI:33019"/>
        <dbReference type="ChEBI" id="CHEBI:58045"/>
        <dbReference type="ChEBI" id="CHEBI:78442"/>
        <dbReference type="ChEBI" id="CHEBI:78528"/>
        <dbReference type="ChEBI" id="CHEBI:456215"/>
        <dbReference type="EC" id="6.1.1.5"/>
    </reaction>
</comment>
<comment type="cofactor">
    <cofactor evidence="1">
        <name>Zn(2+)</name>
        <dbReference type="ChEBI" id="CHEBI:29105"/>
    </cofactor>
    <text evidence="1">Binds 1 zinc ion per subunit.</text>
</comment>
<comment type="subunit">
    <text evidence="1">Monomer.</text>
</comment>
<comment type="subcellular location">
    <subcellularLocation>
        <location evidence="1">Cytoplasm</location>
    </subcellularLocation>
</comment>
<comment type="domain">
    <text evidence="1">IleRS has two distinct active sites: one for aminoacylation and one for editing. The misactivated valine is translocated from the active site to the editing site, which sterically excludes the correctly activated isoleucine. The single editing site contains two valyl binding pockets, one specific for each substrate (Val-AMP or Val-tRNA(Ile)).</text>
</comment>
<comment type="similarity">
    <text evidence="1">Belongs to the class-I aminoacyl-tRNA synthetase family. IleS type 1 subfamily.</text>
</comment>
<protein>
    <recommendedName>
        <fullName evidence="1">Isoleucine--tRNA ligase</fullName>
        <ecNumber evidence="1">6.1.1.5</ecNumber>
    </recommendedName>
    <alternativeName>
        <fullName evidence="1">Isoleucyl-tRNA synthetase</fullName>
        <shortName evidence="1">IleRS</shortName>
    </alternativeName>
</protein>
<keyword id="KW-0030">Aminoacyl-tRNA synthetase</keyword>
<keyword id="KW-0067">ATP-binding</keyword>
<keyword id="KW-0963">Cytoplasm</keyword>
<keyword id="KW-0436">Ligase</keyword>
<keyword id="KW-0479">Metal-binding</keyword>
<keyword id="KW-0547">Nucleotide-binding</keyword>
<keyword id="KW-0648">Protein biosynthesis</keyword>
<keyword id="KW-0862">Zinc</keyword>
<accession>Q602B7</accession>